<gene>
    <name evidence="1" type="primary">PAN2</name>
    <name type="synonym">USP52</name>
    <name type="ORF">RCJMB04_3e13</name>
</gene>
<sequence length="1197" mass="134863">MNFEGLDPSLAEYAPTLHPALDPVLDPHLNPSLLQNVELDPEGVPLEGIAVPESVHIVEGMYSELHTAVSEVGVPVSVSHFDLHEEMLWVGNHGGHATSFFGPTLERYSSFQVNSSDDIRQIQSLESGVLFLTKTNLKCMSRGGLIIFDYLMDEAEDMHSLLLTDSSTLLVGGLQNHVIEIDLNTVQETQKYTVEVPGITIMRQSNRFFFCGHTSGKVSLRDLRTFVVEHEFDAYSGSLSDFDVHGNLLVTCGFSSRMNGLACDRFLKVYDLRMMRATTPLQVHIDPFFLRFIPTYTSRLAIISQTGQCQFCEPTGLANPADIFHVNTVGPLIMTFDVSASKQALAFGDSEGCVHLWADSPEVTFNTYSRETDFALPCIVDTLPHLDWNQDLVPLSLIPVPLTSETLLSDWPAANSAPAPRRAPPVDPEILRTMKKVGFIGYAPNPRTKLRNQIPYRLKEADNEFDSFSQVPESPIGREEEPHLYMVAKKYRKVTIKYSKLGLEDFDFKHYNKTLFAGLEPHIPNAYCNCMIQVLYFLEPVRCLVQNHLCQKEFCLGCELGLLFHMLDLSRGDPCQGSNFLRAFRTIPEASALGLILADSDEATGKVNLGRLIQSWNRFILTQLHQETQEQEGPQAYRGAGSSTFGSSGDSVIGQLFSCEVENCSMCRCGKETVRVSSTLLFTLSYPESAEKPVKDYEFAQILKRSICLEQNTQAWCENCEKYQPTVQTRNIRCLPDVLVINCEVNSSKEADFWKTQAEYAFQRALMKRGGFEITKGKEISLGDWKELGNPEVGHSYPSVEELKNIWIPHAIKMRLTKNKELDVCNWSESDELSPNDDPESVYVYDLMATVVHILDSRTGGSLVGHIKVGETYHQRKEGVTHQQWYLFNDFLIEPVDKCEAVQFDMSWKVPAILYYARRNLNSKYNLVIKNPIEASVLLAEASLARKQRKCHATFIPLMLSEMPQAGDLVGLDAEFVTLNEEEAELRSDGTKSTIKPSQMSVARITCVRGQGPNEGVPFIDDYISTQEQVVDYLTQYSGIKPGDLDAKISSKHLTTLKSTYLKLRFLIDVGVKFVGHGLQKDFRVINLMVPKDQVIDTVYLFHIPRKRMISLRFLAWYFLDLKIQGETHDSIEDARTALQLYRKYLELSQGGSEPDDFRKVLKALYEKGRKLDWKVPEPDSQSSPKHGAVFPPVLAL</sequence>
<feature type="chain" id="PRO_0000280524" description="PAN2-PAN3 deadenylation complex catalytic subunit PAN2">
    <location>
        <begin position="1"/>
        <end position="1197"/>
    </location>
</feature>
<feature type="repeat" description="WD 1" evidence="1">
    <location>
        <begin position="153"/>
        <end position="193"/>
    </location>
</feature>
<feature type="repeat" description="WD 2" evidence="1">
    <location>
        <begin position="195"/>
        <end position="231"/>
    </location>
</feature>
<feature type="repeat" description="WD 3" evidence="1">
    <location>
        <begin position="244"/>
        <end position="280"/>
    </location>
</feature>
<feature type="repeat" description="WD 4" evidence="1">
    <location>
        <begin position="328"/>
        <end position="367"/>
    </location>
</feature>
<feature type="domain" description="USP" evidence="1">
    <location>
        <begin position="486"/>
        <end position="919"/>
    </location>
</feature>
<feature type="domain" description="Exonuclease" evidence="1">
    <location>
        <begin position="970"/>
        <end position="1142"/>
    </location>
</feature>
<feature type="region of interest" description="Linker" evidence="1">
    <location>
        <begin position="368"/>
        <end position="485"/>
    </location>
</feature>
<feature type="region of interest" description="Disordered" evidence="2">
    <location>
        <begin position="1176"/>
        <end position="1197"/>
    </location>
</feature>
<feature type="binding site" evidence="1">
    <location>
        <position position="973"/>
    </location>
    <ligand>
        <name>a divalent metal cation</name>
        <dbReference type="ChEBI" id="CHEBI:60240"/>
        <note>catalytic</note>
    </ligand>
</feature>
<feature type="binding site" evidence="1">
    <location>
        <position position="975"/>
    </location>
    <ligand>
        <name>a divalent metal cation</name>
        <dbReference type="ChEBI" id="CHEBI:60240"/>
        <note>catalytic</note>
    </ligand>
</feature>
<feature type="binding site" evidence="1">
    <location>
        <position position="1082"/>
    </location>
    <ligand>
        <name>a divalent metal cation</name>
        <dbReference type="ChEBI" id="CHEBI:60240"/>
        <note>catalytic</note>
    </ligand>
</feature>
<feature type="binding site" evidence="1">
    <location>
        <position position="1134"/>
    </location>
    <ligand>
        <name>a divalent metal cation</name>
        <dbReference type="ChEBI" id="CHEBI:60240"/>
        <note>catalytic</note>
    </ligand>
</feature>
<proteinExistence type="evidence at transcript level"/>
<accession>Q5F450</accession>
<name>PAN2_CHICK</name>
<evidence type="ECO:0000255" key="1">
    <source>
        <dbReference type="HAMAP-Rule" id="MF_03182"/>
    </source>
</evidence>
<evidence type="ECO:0000256" key="2">
    <source>
        <dbReference type="SAM" id="MobiDB-lite"/>
    </source>
</evidence>
<organism>
    <name type="scientific">Gallus gallus</name>
    <name type="common">Chicken</name>
    <dbReference type="NCBI Taxonomy" id="9031"/>
    <lineage>
        <taxon>Eukaryota</taxon>
        <taxon>Metazoa</taxon>
        <taxon>Chordata</taxon>
        <taxon>Craniata</taxon>
        <taxon>Vertebrata</taxon>
        <taxon>Euteleostomi</taxon>
        <taxon>Archelosauria</taxon>
        <taxon>Archosauria</taxon>
        <taxon>Dinosauria</taxon>
        <taxon>Saurischia</taxon>
        <taxon>Theropoda</taxon>
        <taxon>Coelurosauria</taxon>
        <taxon>Aves</taxon>
        <taxon>Neognathae</taxon>
        <taxon>Galloanserae</taxon>
        <taxon>Galliformes</taxon>
        <taxon>Phasianidae</taxon>
        <taxon>Phasianinae</taxon>
        <taxon>Gallus</taxon>
    </lineage>
</organism>
<dbReference type="EC" id="3.1.13.4" evidence="1"/>
<dbReference type="EMBL" id="AJ851450">
    <property type="protein sequence ID" value="CAH65084.1"/>
    <property type="molecule type" value="mRNA"/>
</dbReference>
<dbReference type="RefSeq" id="NP_001012972.1">
    <property type="nucleotide sequence ID" value="NM_001012954.3"/>
</dbReference>
<dbReference type="RefSeq" id="XP_015155758.1">
    <property type="nucleotide sequence ID" value="XM_015300272.4"/>
</dbReference>
<dbReference type="RefSeq" id="XP_046790210.1">
    <property type="nucleotide sequence ID" value="XM_046934254.1"/>
</dbReference>
<dbReference type="SMR" id="Q5F450"/>
<dbReference type="FunCoup" id="Q5F450">
    <property type="interactions" value="2485"/>
</dbReference>
<dbReference type="STRING" id="9031.ENSGALP00000056405"/>
<dbReference type="PaxDb" id="9031-ENSGALP00000042623"/>
<dbReference type="Ensembl" id="ENSGALT00010060936.1">
    <property type="protein sequence ID" value="ENSGALP00010037693.1"/>
    <property type="gene ID" value="ENSGALG00010024949.1"/>
</dbReference>
<dbReference type="GeneID" id="429172"/>
<dbReference type="KEGG" id="gga:429172"/>
<dbReference type="CTD" id="9924"/>
<dbReference type="VEuPathDB" id="HostDB:geneid_429172"/>
<dbReference type="eggNOG" id="KOG1275">
    <property type="taxonomic scope" value="Eukaryota"/>
</dbReference>
<dbReference type="GeneTree" id="ENSGT00390000013978"/>
<dbReference type="HOGENOM" id="CLU_002369_0_0_1"/>
<dbReference type="InParanoid" id="Q5F450"/>
<dbReference type="OMA" id="TQELLWT"/>
<dbReference type="OrthoDB" id="16516at2759"/>
<dbReference type="PhylomeDB" id="Q5F450"/>
<dbReference type="Reactome" id="R-GGA-429947">
    <property type="pathway name" value="Deadenylation of mRNA"/>
</dbReference>
<dbReference type="PRO" id="PR:Q5F450"/>
<dbReference type="Proteomes" id="UP000000539">
    <property type="component" value="Chromosome 34"/>
</dbReference>
<dbReference type="Bgee" id="ENSGALG00000031512">
    <property type="expression patterns" value="Expressed in testis and 13 other cell types or tissues"/>
</dbReference>
<dbReference type="GO" id="GO:0005634">
    <property type="term" value="C:nucleus"/>
    <property type="evidence" value="ECO:0007669"/>
    <property type="project" value="UniProtKB-SubCell"/>
</dbReference>
<dbReference type="GO" id="GO:0000932">
    <property type="term" value="C:P-body"/>
    <property type="evidence" value="ECO:0000318"/>
    <property type="project" value="GO_Central"/>
</dbReference>
<dbReference type="GO" id="GO:0031251">
    <property type="term" value="C:PAN complex"/>
    <property type="evidence" value="ECO:0000250"/>
    <property type="project" value="UniProtKB"/>
</dbReference>
<dbReference type="GO" id="GO:0000175">
    <property type="term" value="F:3'-5'-RNA exonuclease activity"/>
    <property type="evidence" value="ECO:0000250"/>
    <property type="project" value="UniProtKB"/>
</dbReference>
<dbReference type="GO" id="GO:0046872">
    <property type="term" value="F:metal ion binding"/>
    <property type="evidence" value="ECO:0007669"/>
    <property type="project" value="UniProtKB-KW"/>
</dbReference>
<dbReference type="GO" id="GO:0003676">
    <property type="term" value="F:nucleic acid binding"/>
    <property type="evidence" value="ECO:0007669"/>
    <property type="project" value="InterPro"/>
</dbReference>
<dbReference type="GO" id="GO:0004535">
    <property type="term" value="F:poly(A)-specific ribonuclease activity"/>
    <property type="evidence" value="ECO:0000250"/>
    <property type="project" value="UniProtKB"/>
</dbReference>
<dbReference type="GO" id="GO:0006397">
    <property type="term" value="P:mRNA processing"/>
    <property type="evidence" value="ECO:0007669"/>
    <property type="project" value="UniProtKB-KW"/>
</dbReference>
<dbReference type="GO" id="GO:0000289">
    <property type="term" value="P:nuclear-transcribed mRNA poly(A) tail shortening"/>
    <property type="evidence" value="ECO:0000318"/>
    <property type="project" value="GO_Central"/>
</dbReference>
<dbReference type="GO" id="GO:0010606">
    <property type="term" value="P:positive regulation of cytoplasmic mRNA processing body assembly"/>
    <property type="evidence" value="ECO:0007669"/>
    <property type="project" value="UniProtKB-UniRule"/>
</dbReference>
<dbReference type="CDD" id="cd06143">
    <property type="entry name" value="PAN2_exo"/>
    <property type="match status" value="1"/>
</dbReference>
<dbReference type="CDD" id="cd02672">
    <property type="entry name" value="Peptidase_C19P"/>
    <property type="match status" value="1"/>
</dbReference>
<dbReference type="FunFam" id="2.130.10.10:FF:000059">
    <property type="entry name" value="PAN2-PAN3 deadenylation complex catalytic subunit PAN2"/>
    <property type="match status" value="1"/>
</dbReference>
<dbReference type="FunFam" id="3.30.420.10:FF:000011">
    <property type="entry name" value="PAN2-PAN3 deadenylation complex catalytic subunit PAN2"/>
    <property type="match status" value="1"/>
</dbReference>
<dbReference type="FunFam" id="3.90.70.10:FF:000017">
    <property type="entry name" value="PAN2-PAN3 deadenylation complex catalytic subunit PAN2"/>
    <property type="match status" value="1"/>
</dbReference>
<dbReference type="Gene3D" id="3.90.70.10">
    <property type="entry name" value="Cysteine proteinases"/>
    <property type="match status" value="1"/>
</dbReference>
<dbReference type="Gene3D" id="3.30.420.10">
    <property type="entry name" value="Ribonuclease H-like superfamily/Ribonuclease H"/>
    <property type="match status" value="1"/>
</dbReference>
<dbReference type="Gene3D" id="2.130.10.10">
    <property type="entry name" value="YVTN repeat-like/Quinoprotein amine dehydrogenase"/>
    <property type="match status" value="1"/>
</dbReference>
<dbReference type="HAMAP" id="MF_03182">
    <property type="entry name" value="PAN2"/>
    <property type="match status" value="1"/>
</dbReference>
<dbReference type="InterPro" id="IPR013520">
    <property type="entry name" value="Exonuclease_RNaseT/DNA_pol3"/>
</dbReference>
<dbReference type="InterPro" id="IPR030843">
    <property type="entry name" value="PAN2"/>
</dbReference>
<dbReference type="InterPro" id="IPR050785">
    <property type="entry name" value="PAN2-PAN3_catalytic_subunit"/>
</dbReference>
<dbReference type="InterPro" id="IPR048841">
    <property type="entry name" value="PAN2_N"/>
</dbReference>
<dbReference type="InterPro" id="IPR028881">
    <property type="entry name" value="PAN2_UCH_dom"/>
</dbReference>
<dbReference type="InterPro" id="IPR038765">
    <property type="entry name" value="Papain-like_cys_pep_sf"/>
</dbReference>
<dbReference type="InterPro" id="IPR012337">
    <property type="entry name" value="RNaseH-like_sf"/>
</dbReference>
<dbReference type="InterPro" id="IPR036397">
    <property type="entry name" value="RNaseH_sf"/>
</dbReference>
<dbReference type="InterPro" id="IPR028889">
    <property type="entry name" value="USP_dom"/>
</dbReference>
<dbReference type="InterPro" id="IPR015943">
    <property type="entry name" value="WD40/YVTN_repeat-like_dom_sf"/>
</dbReference>
<dbReference type="InterPro" id="IPR036322">
    <property type="entry name" value="WD40_repeat_dom_sf"/>
</dbReference>
<dbReference type="PANTHER" id="PTHR15728">
    <property type="entry name" value="DEADENYLATION COMPLEX CATALYTIC SUBUNIT PAN2"/>
    <property type="match status" value="1"/>
</dbReference>
<dbReference type="PANTHER" id="PTHR15728:SF0">
    <property type="entry name" value="PAN2-PAN3 DEADENYLATION COMPLEX CATALYTIC SUBUNIT PAN2"/>
    <property type="match status" value="1"/>
</dbReference>
<dbReference type="Pfam" id="PF20770">
    <property type="entry name" value="PAN2_N"/>
    <property type="match status" value="1"/>
</dbReference>
<dbReference type="Pfam" id="PF00929">
    <property type="entry name" value="RNase_T"/>
    <property type="match status" value="1"/>
</dbReference>
<dbReference type="Pfam" id="PF13423">
    <property type="entry name" value="UCH_1"/>
    <property type="match status" value="1"/>
</dbReference>
<dbReference type="SMART" id="SM00479">
    <property type="entry name" value="EXOIII"/>
    <property type="match status" value="1"/>
</dbReference>
<dbReference type="SUPFAM" id="SSF54001">
    <property type="entry name" value="Cysteine proteinases"/>
    <property type="match status" value="1"/>
</dbReference>
<dbReference type="SUPFAM" id="SSF53098">
    <property type="entry name" value="Ribonuclease H-like"/>
    <property type="match status" value="1"/>
</dbReference>
<dbReference type="SUPFAM" id="SSF50978">
    <property type="entry name" value="WD40 repeat-like"/>
    <property type="match status" value="1"/>
</dbReference>
<dbReference type="PROSITE" id="PS50235">
    <property type="entry name" value="USP_3"/>
    <property type="match status" value="1"/>
</dbReference>
<protein>
    <recommendedName>
        <fullName evidence="1">PAN2-PAN3 deadenylation complex catalytic subunit PAN2</fullName>
        <ecNumber evidence="1">3.1.13.4</ecNumber>
    </recommendedName>
    <alternativeName>
        <fullName evidence="1">Inactive ubiquitin carboxyl-terminal hydrolase 52</fullName>
    </alternativeName>
    <alternativeName>
        <fullName evidence="1">PAB1P-dependent poly(A)-specific ribonuclease</fullName>
    </alternativeName>
    <alternativeName>
        <fullName evidence="1">Poly(A)-nuclease deadenylation complex subunit 2</fullName>
        <shortName evidence="1">PAN deadenylation complex subunit 2</shortName>
    </alternativeName>
</protein>
<keyword id="KW-0963">Cytoplasm</keyword>
<keyword id="KW-0269">Exonuclease</keyword>
<keyword id="KW-0378">Hydrolase</keyword>
<keyword id="KW-0479">Metal-binding</keyword>
<keyword id="KW-0507">mRNA processing</keyword>
<keyword id="KW-0540">Nuclease</keyword>
<keyword id="KW-0539">Nucleus</keyword>
<keyword id="KW-1185">Reference proteome</keyword>
<keyword id="KW-0677">Repeat</keyword>
<keyword id="KW-0853">WD repeat</keyword>
<comment type="function">
    <text evidence="1">Catalytic subunit of the poly(A)-nuclease (PAN) deadenylation complex, one of two cytoplasmic mRNA deadenylases involved in general and miRNA-mediated mRNA turnover. PAN specifically shortens poly(A) tails of RNA and the activity is stimulated by poly(A)-binding protein (PABP). PAN deadenylation is followed by rapid degradation of the shortened mRNA tails by the CCR4-NOT complex. Deadenylated mRNAs are then degraded by two alternative mechanisms, namely exosome-mediated 3'-5' exonucleolytic degradation, or deadenylation-dependent mRNA decaping and subsequent 5'-3' exonucleolytic degradation by XRN1.</text>
</comment>
<comment type="catalytic activity">
    <reaction evidence="1">
        <text>Exonucleolytic cleavage of poly(A) to 5'-AMP.</text>
        <dbReference type="EC" id="3.1.13.4"/>
    </reaction>
</comment>
<comment type="cofactor">
    <cofactor evidence="1">
        <name>a divalent metal cation</name>
        <dbReference type="ChEBI" id="CHEBI:60240"/>
    </cofactor>
    <text evidence="1">Binds 2 metal cations per subunit in the catalytic exonuclease domain.</text>
</comment>
<comment type="activity regulation">
    <text evidence="1">Positively regulated by the regulatory subunit PAN3.</text>
</comment>
<comment type="subunit">
    <text evidence="1">Forms a heterotrimer with an asymmetric homodimer of the regulatory subunit PAN3 to form the poly(A)-nuclease (PAN) deadenylation complex.</text>
</comment>
<comment type="subcellular location">
    <subcellularLocation>
        <location evidence="1">Cytoplasm</location>
        <location evidence="1">P-body</location>
    </subcellularLocation>
    <subcellularLocation>
        <location evidence="1">Nucleus</location>
    </subcellularLocation>
    <text evidence="1">Shuttles between nucleus and cytoplasm.</text>
</comment>
<comment type="domain">
    <text evidence="1">Contains a pseudo-UCH domain. This ubiquitin C-terminal hydrolase (UCH)-like or ubiquitin specific protease (USP)-like domain is predicted to be catalytically inactive because it lacks the active site catalytic triad characteristic of thiol proteases, with residues at the equivalent structural positions that are incompatible with catalysis, and it cannot bind ubiquitin. It functions as a structural scaffold for intra- and intermolecular interactions in the complex.</text>
</comment>
<comment type="domain">
    <text evidence="1">The linker, or PAN3 interaction domain (PID), between the WD40 repeats and the pseudo-UCH domain mediates interaction with PAN3.</text>
</comment>
<comment type="similarity">
    <text evidence="1">Belongs to the peptidase C19 family. PAN2 subfamily.</text>
</comment>
<reference key="1">
    <citation type="journal article" date="2005" name="Genome Biol.">
        <title>Full-length cDNAs from chicken bursal lymphocytes to facilitate gene function analysis.</title>
        <authorList>
            <person name="Caldwell R.B."/>
            <person name="Kierzek A.M."/>
            <person name="Arakawa H."/>
            <person name="Bezzubov Y."/>
            <person name="Zaim J."/>
            <person name="Fiedler P."/>
            <person name="Kutter S."/>
            <person name="Blagodatski A."/>
            <person name="Kostovska D."/>
            <person name="Koter M."/>
            <person name="Plachy J."/>
            <person name="Carninci P."/>
            <person name="Hayashizaki Y."/>
            <person name="Buerstedde J.-M."/>
        </authorList>
    </citation>
    <scope>NUCLEOTIDE SEQUENCE [LARGE SCALE MRNA]</scope>
    <source>
        <strain>CB</strain>
        <tissue>Bursa of Fabricius</tissue>
    </source>
</reference>